<organism>
    <name type="scientific">Chaetomium globosum (strain ATCC 6205 / CBS 148.51 / DSM 1962 / NBRC 6347 / NRRL 1970)</name>
    <name type="common">Soil fungus</name>
    <dbReference type="NCBI Taxonomy" id="306901"/>
    <lineage>
        <taxon>Eukaryota</taxon>
        <taxon>Fungi</taxon>
        <taxon>Dikarya</taxon>
        <taxon>Ascomycota</taxon>
        <taxon>Pezizomycotina</taxon>
        <taxon>Sordariomycetes</taxon>
        <taxon>Sordariomycetidae</taxon>
        <taxon>Sordariales</taxon>
        <taxon>Chaetomiaceae</taxon>
        <taxon>Chaetomium</taxon>
    </lineage>
</organism>
<keyword id="KW-0067">ATP-binding</keyword>
<keyword id="KW-0347">Helicase</keyword>
<keyword id="KW-0378">Hydrolase</keyword>
<keyword id="KW-0507">mRNA processing</keyword>
<keyword id="KW-0508">mRNA splicing</keyword>
<keyword id="KW-0547">Nucleotide-binding</keyword>
<keyword id="KW-0539">Nucleus</keyword>
<keyword id="KW-1185">Reference proteome</keyword>
<proteinExistence type="inferred from homology"/>
<sequence length="1064" mass="114993">MTITEAVAVMEEAIETVVGHATEAQTERDRQIAEDNGAEMVTGTTAPAKSTPTQAQTEAEKKAERLRKLQAMKEKHAQKEAKEAAVTAGSTRMLLAEMDQKASGTPGPNSPVAGAMSPAPTSPAPPMPYAGKFDPKAIAKSSKAARPQSPTRLGDVKLAAPAPKPLGLKKEANLKGAGLLPANRAKSSTKRKIDMDDEEVIKRKLVKLPDFVPENADSTPDAEGEGEEEADDLDLLMAQNEEEMAEAHRVLQERRDERIQKEGMAMDVDTETPNGETKDEAENEANVESKDEAVLPAPSMDVDEDVDPLDAFMADLEQTGSAGGIGSVPARQKQKAGKGFEPEAYFSDDDYGYEEDKADPSSILAMASKKKKKDIPTIDYSKIELNQIRKNFWVEPQELSQMTEDDIADLRLELDGIKVSGKNVPKPVQKWSQCGLTRPILDVVEGLGYEKPTSIQMQALPVIMSGRDVIGVAKTGSGKTMAFVLPMLRHIKDQDPVTGDDGAIALIMTPTRELCTQIYSDLLPFAKALKLRAIAAYGGNAIKDQIAELKRGAEIIVATPGRMIDLLAANSGRVTNLKRATYLVLDEADRMFDMGFEPQVMKIFNNVRPDRQTILFSATMPRIIDALTKKVLREPVEIQVGGRSVVAPEITQIVEILDEGKKFVRLLELLGELYADDDDVRALIFVERQEKADDLLREVLRRGYGCMSIHGGKDQEDRNSTISDFKKGVCPIMIATSVAARGLDVKQLKLVVNYDAPNHLEDYVHRAGRTGRAGNTGTAVTFITEEQENCAPGIAKALEQSGQPVPEQLNEMRKAWKEKVKTGKAKDASGFGGKGLERLDKEREAARVRERKTHKAEGEEDDFKEEETAEDAAKKDKAKSAILAAASAIVSRESAKADASEAKPLPAAAEGAVKGGVTVNAGKGGALDKAASAISEINARLARAGQLRPGQPIDNKGPDAGAFHATLEINDFPQKARWAVTNRTNVAKILEATSTSITTKGNYYPPGKEPPSGSDPKLYILIEGDTELAVGKALSELTRLLREGTIAAADAESRAPASGRYTIA</sequence>
<gene>
    <name type="primary">PRP5</name>
    <name type="ORF">CHGG_02816</name>
</gene>
<accession>Q2HAD8</accession>
<reference key="1">
    <citation type="journal article" date="2015" name="Genome Announc.">
        <title>Draft genome sequence of the cellulolytic fungus Chaetomium globosum.</title>
        <authorList>
            <person name="Cuomo C.A."/>
            <person name="Untereiner W.A."/>
            <person name="Ma L.-J."/>
            <person name="Grabherr M."/>
            <person name="Birren B.W."/>
        </authorList>
    </citation>
    <scope>NUCLEOTIDE SEQUENCE [LARGE SCALE GENOMIC DNA]</scope>
    <source>
        <strain>ATCC 6205 / CBS 148.51 / DSM 1962 / NBRC 6347 / NRRL 1970</strain>
    </source>
</reference>
<dbReference type="EC" id="3.6.4.13"/>
<dbReference type="EMBL" id="CH408030">
    <property type="protein sequence ID" value="EAQ90881.1"/>
    <property type="molecule type" value="Genomic_DNA"/>
</dbReference>
<dbReference type="RefSeq" id="XP_001229332.1">
    <property type="nucleotide sequence ID" value="XM_001229331.1"/>
</dbReference>
<dbReference type="SMR" id="Q2HAD8"/>
<dbReference type="FunCoup" id="Q2HAD8">
    <property type="interactions" value="910"/>
</dbReference>
<dbReference type="STRING" id="306901.Q2HAD8"/>
<dbReference type="GeneID" id="4388898"/>
<dbReference type="VEuPathDB" id="FungiDB:CHGG_02816"/>
<dbReference type="eggNOG" id="KOG0334">
    <property type="taxonomic scope" value="Eukaryota"/>
</dbReference>
<dbReference type="HOGENOM" id="CLU_003041_0_3_1"/>
<dbReference type="InParanoid" id="Q2HAD8"/>
<dbReference type="OMA" id="QLPMKKW"/>
<dbReference type="OrthoDB" id="196131at2759"/>
<dbReference type="Proteomes" id="UP000001056">
    <property type="component" value="Unassembled WGS sequence"/>
</dbReference>
<dbReference type="GO" id="GO:0005634">
    <property type="term" value="C:nucleus"/>
    <property type="evidence" value="ECO:0007669"/>
    <property type="project" value="UniProtKB-SubCell"/>
</dbReference>
<dbReference type="GO" id="GO:0005524">
    <property type="term" value="F:ATP binding"/>
    <property type="evidence" value="ECO:0007669"/>
    <property type="project" value="UniProtKB-KW"/>
</dbReference>
<dbReference type="GO" id="GO:0016887">
    <property type="term" value="F:ATP hydrolysis activity"/>
    <property type="evidence" value="ECO:0007669"/>
    <property type="project" value="RHEA"/>
</dbReference>
<dbReference type="GO" id="GO:0003676">
    <property type="term" value="F:nucleic acid binding"/>
    <property type="evidence" value="ECO:0007669"/>
    <property type="project" value="InterPro"/>
</dbReference>
<dbReference type="GO" id="GO:0003724">
    <property type="term" value="F:RNA helicase activity"/>
    <property type="evidence" value="ECO:0007669"/>
    <property type="project" value="UniProtKB-EC"/>
</dbReference>
<dbReference type="GO" id="GO:0006397">
    <property type="term" value="P:mRNA processing"/>
    <property type="evidence" value="ECO:0007669"/>
    <property type="project" value="UniProtKB-KW"/>
</dbReference>
<dbReference type="GO" id="GO:0008380">
    <property type="term" value="P:RNA splicing"/>
    <property type="evidence" value="ECO:0007669"/>
    <property type="project" value="UniProtKB-KW"/>
</dbReference>
<dbReference type="CDD" id="cd17953">
    <property type="entry name" value="DEADc_DDX46"/>
    <property type="match status" value="1"/>
</dbReference>
<dbReference type="CDD" id="cd22474">
    <property type="entry name" value="KH-I_PRP5_like"/>
    <property type="match status" value="1"/>
</dbReference>
<dbReference type="CDD" id="cd18787">
    <property type="entry name" value="SF2_C_DEAD"/>
    <property type="match status" value="1"/>
</dbReference>
<dbReference type="FunFam" id="3.40.50.300:FF:000079">
    <property type="entry name" value="probable ATP-dependent RNA helicase DDX17"/>
    <property type="match status" value="1"/>
</dbReference>
<dbReference type="Gene3D" id="3.40.50.300">
    <property type="entry name" value="P-loop containing nucleotide triphosphate hydrolases"/>
    <property type="match status" value="2"/>
</dbReference>
<dbReference type="InterPro" id="IPR011545">
    <property type="entry name" value="DEAD/DEAH_box_helicase_dom"/>
</dbReference>
<dbReference type="InterPro" id="IPR014001">
    <property type="entry name" value="Helicase_ATP-bd"/>
</dbReference>
<dbReference type="InterPro" id="IPR001650">
    <property type="entry name" value="Helicase_C-like"/>
</dbReference>
<dbReference type="InterPro" id="IPR027417">
    <property type="entry name" value="P-loop_NTPase"/>
</dbReference>
<dbReference type="InterPro" id="IPR056149">
    <property type="entry name" value="PRP5/DDX46/KHDC4_KH"/>
</dbReference>
<dbReference type="InterPro" id="IPR000629">
    <property type="entry name" value="RNA-helicase_DEAD-box_CS"/>
</dbReference>
<dbReference type="InterPro" id="IPR014014">
    <property type="entry name" value="RNA_helicase_DEAD_Q_motif"/>
</dbReference>
<dbReference type="PANTHER" id="PTHR47958">
    <property type="entry name" value="ATP-DEPENDENT RNA HELICASE DBP3"/>
    <property type="match status" value="1"/>
</dbReference>
<dbReference type="Pfam" id="PF00270">
    <property type="entry name" value="DEAD"/>
    <property type="match status" value="1"/>
</dbReference>
<dbReference type="Pfam" id="PF00271">
    <property type="entry name" value="Helicase_C"/>
    <property type="match status" value="1"/>
</dbReference>
<dbReference type="Pfam" id="PF23469">
    <property type="entry name" value="KH_12"/>
    <property type="match status" value="1"/>
</dbReference>
<dbReference type="SMART" id="SM00487">
    <property type="entry name" value="DEXDc"/>
    <property type="match status" value="1"/>
</dbReference>
<dbReference type="SMART" id="SM00490">
    <property type="entry name" value="HELICc"/>
    <property type="match status" value="1"/>
</dbReference>
<dbReference type="SUPFAM" id="SSF52540">
    <property type="entry name" value="P-loop containing nucleoside triphosphate hydrolases"/>
    <property type="match status" value="1"/>
</dbReference>
<dbReference type="PROSITE" id="PS00039">
    <property type="entry name" value="DEAD_ATP_HELICASE"/>
    <property type="match status" value="1"/>
</dbReference>
<dbReference type="PROSITE" id="PS51192">
    <property type="entry name" value="HELICASE_ATP_BIND_1"/>
    <property type="match status" value="1"/>
</dbReference>
<dbReference type="PROSITE" id="PS51194">
    <property type="entry name" value="HELICASE_CTER"/>
    <property type="match status" value="1"/>
</dbReference>
<dbReference type="PROSITE" id="PS51195">
    <property type="entry name" value="Q_MOTIF"/>
    <property type="match status" value="1"/>
</dbReference>
<protein>
    <recommendedName>
        <fullName>Pre-mRNA-processing ATP-dependent RNA helicase PRP5</fullName>
        <ecNumber>3.6.4.13</ecNumber>
    </recommendedName>
</protein>
<feature type="chain" id="PRO_0000256033" description="Pre-mRNA-processing ATP-dependent RNA helicase PRP5">
    <location>
        <begin position="1"/>
        <end position="1064"/>
    </location>
</feature>
<feature type="domain" description="Helicase ATP-binding" evidence="2">
    <location>
        <begin position="460"/>
        <end position="638"/>
    </location>
</feature>
<feature type="domain" description="Helicase C-terminal" evidence="3">
    <location>
        <begin position="665"/>
        <end position="813"/>
    </location>
</feature>
<feature type="region of interest" description="Disordered" evidence="4">
    <location>
        <begin position="22"/>
        <end position="63"/>
    </location>
</feature>
<feature type="region of interest" description="Disordered" evidence="4">
    <location>
        <begin position="97"/>
        <end position="170"/>
    </location>
</feature>
<feature type="region of interest" description="Disordered" evidence="4">
    <location>
        <begin position="211"/>
        <end position="231"/>
    </location>
</feature>
<feature type="region of interest" description="Disordered" evidence="4">
    <location>
        <begin position="257"/>
        <end position="305"/>
    </location>
</feature>
<feature type="region of interest" description="Disordered" evidence="4">
    <location>
        <begin position="320"/>
        <end position="346"/>
    </location>
</feature>
<feature type="region of interest" description="Disordered" evidence="4">
    <location>
        <begin position="820"/>
        <end position="872"/>
    </location>
</feature>
<feature type="short sequence motif" description="Q motif">
    <location>
        <begin position="429"/>
        <end position="457"/>
    </location>
</feature>
<feature type="short sequence motif" description="DEAD box">
    <location>
        <begin position="586"/>
        <end position="589"/>
    </location>
</feature>
<feature type="compositionally biased region" description="Polar residues" evidence="4">
    <location>
        <begin position="42"/>
        <end position="57"/>
    </location>
</feature>
<feature type="compositionally biased region" description="Acidic residues" evidence="4">
    <location>
        <begin position="220"/>
        <end position="231"/>
    </location>
</feature>
<feature type="compositionally biased region" description="Basic and acidic residues" evidence="4">
    <location>
        <begin position="835"/>
        <end position="848"/>
    </location>
</feature>
<feature type="compositionally biased region" description="Acidic residues" evidence="4">
    <location>
        <begin position="858"/>
        <end position="870"/>
    </location>
</feature>
<feature type="binding site" evidence="2">
    <location>
        <begin position="473"/>
        <end position="480"/>
    </location>
    <ligand>
        <name>ATP</name>
        <dbReference type="ChEBI" id="CHEBI:30616"/>
    </ligand>
</feature>
<comment type="function">
    <text evidence="1">ATP-dependent RNA helicase involved spliceosome assembly and in nuclear splicing. Catalyzes an ATP-dependent conformational change of U2 snRNP. Bridges U1 and U2 snRNPs and enables stable U2 snRNP association with intron RNA (By similarity).</text>
</comment>
<comment type="catalytic activity">
    <reaction>
        <text>ATP + H2O = ADP + phosphate + H(+)</text>
        <dbReference type="Rhea" id="RHEA:13065"/>
        <dbReference type="ChEBI" id="CHEBI:15377"/>
        <dbReference type="ChEBI" id="CHEBI:15378"/>
        <dbReference type="ChEBI" id="CHEBI:30616"/>
        <dbReference type="ChEBI" id="CHEBI:43474"/>
        <dbReference type="ChEBI" id="CHEBI:456216"/>
        <dbReference type="EC" id="3.6.4.13"/>
    </reaction>
</comment>
<comment type="subcellular location">
    <subcellularLocation>
        <location evidence="1">Nucleus</location>
    </subcellularLocation>
</comment>
<comment type="domain">
    <text>The Q motif is unique to and characteristic of the DEAD box family of RNA helicases and controls ATP binding and hydrolysis.</text>
</comment>
<comment type="similarity">
    <text evidence="5">Belongs to the DEAD box helicase family. DDX46/PRP5 subfamily.</text>
</comment>
<evidence type="ECO:0000250" key="1"/>
<evidence type="ECO:0000255" key="2">
    <source>
        <dbReference type="PROSITE-ProRule" id="PRU00541"/>
    </source>
</evidence>
<evidence type="ECO:0000255" key="3">
    <source>
        <dbReference type="PROSITE-ProRule" id="PRU00542"/>
    </source>
</evidence>
<evidence type="ECO:0000256" key="4">
    <source>
        <dbReference type="SAM" id="MobiDB-lite"/>
    </source>
</evidence>
<evidence type="ECO:0000305" key="5"/>
<name>PRP5_CHAGB</name>